<organism>
    <name type="scientific">Kitagawia praeruptora</name>
    <name type="common">Peucedanum praeruptorum</name>
    <dbReference type="NCBI Taxonomy" id="312531"/>
    <lineage>
        <taxon>Eukaryota</taxon>
        <taxon>Viridiplantae</taxon>
        <taxon>Streptophyta</taxon>
        <taxon>Embryophyta</taxon>
        <taxon>Tracheophyta</taxon>
        <taxon>Spermatophyta</taxon>
        <taxon>Magnoliopsida</taxon>
        <taxon>eudicotyledons</taxon>
        <taxon>Gunneridae</taxon>
        <taxon>Pentapetalae</taxon>
        <taxon>asterids</taxon>
        <taxon>campanulids</taxon>
        <taxon>Apiales</taxon>
        <taxon>Apiaceae</taxon>
        <taxon>Apioideae</taxon>
        <taxon>apioid superclade</taxon>
        <taxon>Selineae</taxon>
        <taxon>Kitagawia</taxon>
    </lineage>
</organism>
<reference key="1">
    <citation type="journal article" date="2019" name="Int. J. Mol. Sci.">
        <title>The molecular and structural basis of O-methylation reaction in coumarin biosynthesis in Peucedanum praeruptorum Dunn.</title>
        <authorList>
            <person name="Zhao Y."/>
            <person name="Wang N."/>
            <person name="Sui Z."/>
            <person name="Huang C."/>
            <person name="Zeng Z."/>
            <person name="Kong L."/>
        </authorList>
    </citation>
    <scope>X-RAY CRYSTALLOGRAPHY (2.53 ANGSTROMS)</scope>
    <scope>NUCLEOTIDE SEQUENCE [MRNA]</scope>
    <scope>FUNCTION</scope>
    <scope>MUTAGENESIS OF ASN-132; LEU-137; PHE-164; PRO-171; MET-181; SER-185; ASP-232; LEU-233; ASP-252; MET-253; LYS-266; TRP-267; HIS-270; ASP-271; ILE-317; ILE-320; MET-321 AND ASN-325</scope>
    <scope>CATALYTIC ACTIVITY</scope>
    <scope>PATHWAY</scope>
    <scope>BIOPHYSICOCHEMICAL PROPERTIES</scope>
    <scope>ACTIVITY REGULATION</scope>
    <scope>TISSUE SPECIFICITY</scope>
    <scope>INDUCTION BY UV AND HYDROGEN PEROXYDE</scope>
    <source>
        <tissue>Root</tissue>
    </source>
</reference>
<gene>
    <name evidence="5" type="primary">COMT-S</name>
</gene>
<proteinExistence type="evidence at protein level"/>
<sequence>MTTTELIPPTIQVDEEEEEACMFAMQLASASVLPMVLKSAIELDLLESIAKAGPGAYVSPSELAAKLPSSQPDTPVMLDRILRLLASYSVLKCKVQDLPQGGVERLYALAPVCKFLTKNSDGVSMAPLLLMNQDKILMESWYHLKDAVLDGGIPFNKAYGMTAFEYHGKDPRFNKVFNLGMSNHSTITMKKILQTYNGFAGLKTVVDVGGGTGATLNMIISKYPNIKGINFDLPHVVEDAPSYPGVEHVGGDMFVSVPEGDAIFMKWICHDWSDAHCLSFLKNCYKALPQNGKVILAECILPEAPDSKLTTKNVIHIDVIMLAHNPGGKERTEKEFEALGKMAGFKSFNKVCCAHNTWIMEFLK</sequence>
<keyword id="KW-0002">3D-structure</keyword>
<keyword id="KW-0489">Methyltransferase</keyword>
<keyword id="KW-0949">S-adenosyl-L-methionine</keyword>
<keyword id="KW-0808">Transferase</keyword>
<evidence type="ECO:0000250" key="1">
    <source>
        <dbReference type="UniProtKB" id="A0A166U5H3"/>
    </source>
</evidence>
<evidence type="ECO:0000250" key="2">
    <source>
        <dbReference type="UniProtKB" id="P28002"/>
    </source>
</evidence>
<evidence type="ECO:0000255" key="3">
    <source>
        <dbReference type="PROSITE-ProRule" id="PRU01020"/>
    </source>
</evidence>
<evidence type="ECO:0000269" key="4">
    <source>
    </source>
</evidence>
<evidence type="ECO:0000303" key="5">
    <source>
    </source>
</evidence>
<evidence type="ECO:0000305" key="6"/>
<evidence type="ECO:0007829" key="7">
    <source>
        <dbReference type="PDB" id="6IWT"/>
    </source>
</evidence>
<protein>
    <recommendedName>
        <fullName evidence="5">Esculetin O-methyltransferase</fullName>
        <ecNumber evidence="3 4">2.1.1.-</ecNumber>
    </recommendedName>
    <alternativeName>
        <fullName evidence="5">Bergaptol O-methyltransferase</fullName>
        <ecNumber evidence="4">2.1.1.69</ecNumber>
    </alternativeName>
    <alternativeName>
        <fullName evidence="5">Isoscopoletin O-methyltransferase</fullName>
        <ecNumber evidence="4">2.1.1.-</ecNumber>
    </alternativeName>
    <alternativeName>
        <fullName evidence="5">Scopoletin O-methyltransferase</fullName>
        <ecNumber evidence="4">2.1.1.-</ecNumber>
    </alternativeName>
    <alternativeName>
        <fullName evidence="5">Xanthotoxol O-methyltransferase</fullName>
        <ecNumber evidence="4">2.1.1.70</ecNumber>
    </alternativeName>
</protein>
<comment type="function">
    <text evidence="4">O-methyltransferase involved in the biosynthesis of methoxylated coumarins natural products such as isoscopoletin, scopoletin, xanthotoxin and bergapten, photosensitizers used for medical purpose such as treating psoriasis and vitiligo or facilitating resistance to microbial infection and other stresses (PubMed:30934718). Catalyzes the methylation of esculetin, bergaptol and xanthotoxol, but seems inactive on scopoletin and isoscopoletin (PubMed:30934718).</text>
</comment>
<comment type="catalytic activity">
    <reaction evidence="4">
        <text>bergaptol + S-adenosyl-L-methionine = bergapten + S-adenosyl-L-homocysteine</text>
        <dbReference type="Rhea" id="RHEA:11808"/>
        <dbReference type="ChEBI" id="CHEBI:18293"/>
        <dbReference type="ChEBI" id="CHEBI:57856"/>
        <dbReference type="ChEBI" id="CHEBI:59789"/>
        <dbReference type="ChEBI" id="CHEBI:77728"/>
        <dbReference type="EC" id="2.1.1.69"/>
    </reaction>
    <physiologicalReaction direction="left-to-right" evidence="4">
        <dbReference type="Rhea" id="RHEA:11809"/>
    </physiologicalReaction>
</comment>
<comment type="catalytic activity">
    <reaction evidence="4">
        <text>xanthotoxol + S-adenosyl-L-methionine = xanthotoxin + S-adenosyl-L-homocysteine + H(+)</text>
        <dbReference type="Rhea" id="RHEA:17901"/>
        <dbReference type="ChEBI" id="CHEBI:15378"/>
        <dbReference type="ChEBI" id="CHEBI:15709"/>
        <dbReference type="ChEBI" id="CHEBI:18358"/>
        <dbReference type="ChEBI" id="CHEBI:57856"/>
        <dbReference type="ChEBI" id="CHEBI:59789"/>
        <dbReference type="EC" id="2.1.1.70"/>
    </reaction>
    <physiologicalReaction direction="left-to-right" evidence="4">
        <dbReference type="Rhea" id="RHEA:17902"/>
    </physiologicalReaction>
</comment>
<comment type="catalytic activity">
    <reaction evidence="4">
        <text>esculetin + S-adenosyl-L-methionine = isoscopoletin + S-adenosyl-L-homocysteine + H(+)</text>
        <dbReference type="Rhea" id="RHEA:68944"/>
        <dbReference type="ChEBI" id="CHEBI:15378"/>
        <dbReference type="ChEBI" id="CHEBI:57856"/>
        <dbReference type="ChEBI" id="CHEBI:59789"/>
        <dbReference type="ChEBI" id="CHEBI:81484"/>
        <dbReference type="ChEBI" id="CHEBI:490095"/>
    </reaction>
    <physiologicalReaction direction="left-to-right" evidence="4">
        <dbReference type="Rhea" id="RHEA:68945"/>
    </physiologicalReaction>
</comment>
<comment type="catalytic activity">
    <reaction evidence="4">
        <text>esculetin + S-adenosyl-L-methionine = scopoletin + S-adenosyl-L-homocysteine + H(+)</text>
        <dbReference type="Rhea" id="RHEA:68948"/>
        <dbReference type="ChEBI" id="CHEBI:15378"/>
        <dbReference type="ChEBI" id="CHEBI:17488"/>
        <dbReference type="ChEBI" id="CHEBI:57856"/>
        <dbReference type="ChEBI" id="CHEBI:59789"/>
        <dbReference type="ChEBI" id="CHEBI:490095"/>
    </reaction>
    <physiologicalReaction direction="left-to-right" evidence="4">
        <dbReference type="Rhea" id="RHEA:68949"/>
    </physiologicalReaction>
</comment>
<comment type="activity regulation">
    <text evidence="4">Inhibited by zinc Zn(2+), copper Cu(2+) and silver Ag(+) ions.</text>
</comment>
<comment type="biophysicochemical properties">
    <phDependence>
        <text evidence="4">Optimum pH is 7.5.</text>
    </phDependence>
</comment>
<comment type="pathway">
    <text evidence="4">Aromatic compound metabolism.</text>
</comment>
<comment type="pathway">
    <text evidence="4">Secondary metabolite biosynthesis.</text>
</comment>
<comment type="subunit">
    <text evidence="2">Homodimer.</text>
</comment>
<comment type="tissue specificity">
    <text evidence="4">Expressed ubiquitously.</text>
</comment>
<comment type="induction">
    <text evidence="4">Induced by UV light and hydrogen peroxyde H(2)O(2).</text>
</comment>
<comment type="similarity">
    <text evidence="3 6">Belongs to the class I-like SAM-binding methyltransferase superfamily. Cation-independent O-methyltransferase family. COMT subfamily.</text>
</comment>
<dbReference type="EC" id="2.1.1.-" evidence="3 4"/>
<dbReference type="EC" id="2.1.1.69" evidence="4"/>
<dbReference type="EC" id="2.1.1.70" evidence="4"/>
<dbReference type="EMBL" id="MK005887">
    <property type="protein sequence ID" value="QCO31674.1"/>
    <property type="molecule type" value="mRNA"/>
</dbReference>
<dbReference type="PDB" id="6IWT">
    <property type="method" value="X-ray"/>
    <property type="resolution" value="2.53 A"/>
    <property type="chains" value="A/B=1-364"/>
</dbReference>
<dbReference type="PDBsum" id="6IWT"/>
<dbReference type="SMR" id="A0A4P8DY91"/>
<dbReference type="GO" id="GO:0016206">
    <property type="term" value="F:catechol O-methyltransferase activity"/>
    <property type="evidence" value="ECO:0007669"/>
    <property type="project" value="UniProtKB-EC"/>
</dbReference>
<dbReference type="GO" id="GO:0008171">
    <property type="term" value="F:O-methyltransferase activity"/>
    <property type="evidence" value="ECO:0000314"/>
    <property type="project" value="UniProtKB"/>
</dbReference>
<dbReference type="GO" id="GO:0046983">
    <property type="term" value="F:protein dimerization activity"/>
    <property type="evidence" value="ECO:0007669"/>
    <property type="project" value="InterPro"/>
</dbReference>
<dbReference type="GO" id="GO:0008757">
    <property type="term" value="F:S-adenosylmethionine-dependent methyltransferase activity"/>
    <property type="evidence" value="ECO:0000314"/>
    <property type="project" value="UniProtKB"/>
</dbReference>
<dbReference type="GO" id="GO:0009805">
    <property type="term" value="P:coumarin biosynthetic process"/>
    <property type="evidence" value="ECO:0000314"/>
    <property type="project" value="UniProtKB"/>
</dbReference>
<dbReference type="GO" id="GO:0032259">
    <property type="term" value="P:methylation"/>
    <property type="evidence" value="ECO:0007669"/>
    <property type="project" value="UniProtKB-KW"/>
</dbReference>
<dbReference type="GO" id="GO:0042542">
    <property type="term" value="P:response to hydrogen peroxide"/>
    <property type="evidence" value="ECO:0000270"/>
    <property type="project" value="UniProtKB"/>
</dbReference>
<dbReference type="GO" id="GO:0009411">
    <property type="term" value="P:response to UV"/>
    <property type="evidence" value="ECO:0000270"/>
    <property type="project" value="UniProtKB"/>
</dbReference>
<dbReference type="CDD" id="cd02440">
    <property type="entry name" value="AdoMet_MTases"/>
    <property type="match status" value="1"/>
</dbReference>
<dbReference type="FunFam" id="1.10.10.10:FF:000357">
    <property type="entry name" value="Caffeic acid 3-O-methyltransferase"/>
    <property type="match status" value="1"/>
</dbReference>
<dbReference type="FunFam" id="3.40.50.150:FF:000061">
    <property type="entry name" value="Caffeic acid O-methyltransferase"/>
    <property type="match status" value="1"/>
</dbReference>
<dbReference type="Gene3D" id="3.40.50.150">
    <property type="entry name" value="Vaccinia Virus protein VP39"/>
    <property type="match status" value="1"/>
</dbReference>
<dbReference type="Gene3D" id="1.10.10.10">
    <property type="entry name" value="Winged helix-like DNA-binding domain superfamily/Winged helix DNA-binding domain"/>
    <property type="match status" value="1"/>
</dbReference>
<dbReference type="InterPro" id="IPR016461">
    <property type="entry name" value="COMT-like"/>
</dbReference>
<dbReference type="InterPro" id="IPR001077">
    <property type="entry name" value="O_MeTrfase_dom"/>
</dbReference>
<dbReference type="InterPro" id="IPR012967">
    <property type="entry name" value="Plant_O-MeTrfase_dimerisation"/>
</dbReference>
<dbReference type="InterPro" id="IPR029063">
    <property type="entry name" value="SAM-dependent_MTases_sf"/>
</dbReference>
<dbReference type="InterPro" id="IPR036388">
    <property type="entry name" value="WH-like_DNA-bd_sf"/>
</dbReference>
<dbReference type="InterPro" id="IPR036390">
    <property type="entry name" value="WH_DNA-bd_sf"/>
</dbReference>
<dbReference type="PANTHER" id="PTHR11746">
    <property type="entry name" value="O-METHYLTRANSFERASE"/>
    <property type="match status" value="1"/>
</dbReference>
<dbReference type="Pfam" id="PF08100">
    <property type="entry name" value="Dimerisation"/>
    <property type="match status" value="1"/>
</dbReference>
<dbReference type="Pfam" id="PF00891">
    <property type="entry name" value="Methyltransf_2"/>
    <property type="match status" value="1"/>
</dbReference>
<dbReference type="PIRSF" id="PIRSF005739">
    <property type="entry name" value="O-mtase"/>
    <property type="match status" value="1"/>
</dbReference>
<dbReference type="SUPFAM" id="SSF53335">
    <property type="entry name" value="S-adenosyl-L-methionine-dependent methyltransferases"/>
    <property type="match status" value="1"/>
</dbReference>
<dbReference type="SUPFAM" id="SSF46785">
    <property type="entry name" value="Winged helix' DNA-binding domain"/>
    <property type="match status" value="1"/>
</dbReference>
<dbReference type="PROSITE" id="PS51683">
    <property type="entry name" value="SAM_OMT_II"/>
    <property type="match status" value="1"/>
</dbReference>
<name>COMTS_KITPR</name>
<accession>A0A4P8DY91</accession>
<feature type="chain" id="PRO_0000454880" description="Esculetin O-methyltransferase">
    <location>
        <begin position="1"/>
        <end position="364"/>
    </location>
</feature>
<feature type="active site" description="Proton acceptor" evidence="3">
    <location>
        <position position="270"/>
    </location>
</feature>
<feature type="binding site" evidence="1">
    <location>
        <position position="132"/>
    </location>
    <ligand>
        <name>bergaptol</name>
        <dbReference type="ChEBI" id="CHEBI:77728"/>
    </ligand>
</feature>
<feature type="binding site" evidence="2">
    <location>
        <position position="209"/>
    </location>
    <ligand>
        <name>S-adenosyl-L-homocysteine</name>
        <dbReference type="ChEBI" id="CHEBI:57856"/>
    </ligand>
</feature>
<feature type="binding site" evidence="2">
    <location>
        <position position="232"/>
    </location>
    <ligand>
        <name>S-adenosyl-L-homocysteine</name>
        <dbReference type="ChEBI" id="CHEBI:57856"/>
    </ligand>
</feature>
<feature type="binding site" evidence="2">
    <location>
        <position position="252"/>
    </location>
    <ligand>
        <name>S-adenosyl-L-homocysteine</name>
        <dbReference type="ChEBI" id="CHEBI:57856"/>
    </ligand>
</feature>
<feature type="binding site" evidence="2">
    <location>
        <position position="253"/>
    </location>
    <ligand>
        <name>S-adenosyl-L-homocysteine</name>
        <dbReference type="ChEBI" id="CHEBI:57856"/>
    </ligand>
</feature>
<feature type="binding site" evidence="2">
    <location>
        <position position="265"/>
    </location>
    <ligand>
        <name>S-adenosyl-L-homocysteine</name>
        <dbReference type="ChEBI" id="CHEBI:57856"/>
    </ligand>
</feature>
<feature type="binding site" evidence="2">
    <location>
        <position position="266"/>
    </location>
    <ligand>
        <name>S-adenosyl-L-homocysteine</name>
        <dbReference type="ChEBI" id="CHEBI:57856"/>
    </ligand>
</feature>
<feature type="binding site" evidence="1">
    <location>
        <position position="270"/>
    </location>
    <ligand>
        <name>bergaptol</name>
        <dbReference type="ChEBI" id="CHEBI:77728"/>
    </ligand>
</feature>
<feature type="site" description="Determines the catalytic selectivity of hydroxyl groups in esculetin between the 6-hydroxyl and 7-hydroxyl groups" evidence="4">
    <location>
        <position position="132"/>
    </location>
</feature>
<feature type="mutagenesis site" description="Modified catalytic selectivity of hydroxyl groups in esculetin with an enhanced production of scopoletin, acquired possibility to use scopoletin and isoscopoletin as substrates, but abolished synthesis of isoscopoletin." evidence="4">
    <original>N</original>
    <variation>A</variation>
    <location>
        <position position="132"/>
    </location>
</feature>
<feature type="mutagenesis site" description="Abolished activity." evidence="4">
    <original>L</original>
    <variation>A</variation>
    <location>
        <position position="137"/>
    </location>
</feature>
<feature type="mutagenesis site" description="Abolished activity." evidence="4">
    <original>F</original>
    <variation>A</variation>
    <location>
        <position position="164"/>
    </location>
</feature>
<feature type="mutagenesis site" description="Abolished activity." evidence="4">
    <original>P</original>
    <variation>A</variation>
    <location>
        <position position="171"/>
    </location>
</feature>
<feature type="mutagenesis site" description="Reduced activity." evidence="4">
    <original>M</original>
    <variation>A</variation>
    <location>
        <position position="181"/>
    </location>
</feature>
<feature type="mutagenesis site" description="Reduced activity." evidence="4">
    <original>S</original>
    <variation>A</variation>
    <location>
        <position position="185"/>
    </location>
</feature>
<feature type="mutagenesis site" description="Abolished activity." evidence="4">
    <original>D</original>
    <variation>A</variation>
    <location>
        <position position="232"/>
    </location>
</feature>
<feature type="mutagenesis site" description="Abolished activity." evidence="4">
    <original>L</original>
    <variation>A</variation>
    <location>
        <position position="233"/>
    </location>
</feature>
<feature type="mutagenesis site" description="Abolished activity." evidence="4">
    <original>D</original>
    <variation>A</variation>
    <location>
        <position position="252"/>
    </location>
</feature>
<feature type="mutagenesis site" description="Reduced activity." evidence="4">
    <original>M</original>
    <variation>A</variation>
    <location>
        <position position="253"/>
    </location>
</feature>
<feature type="mutagenesis site" description="Reduced activity." evidence="4">
    <original>K</original>
    <variation>A</variation>
    <location>
        <position position="266"/>
    </location>
</feature>
<feature type="mutagenesis site" description="Abolished activity." evidence="4">
    <original>W</original>
    <variation>A</variation>
    <location>
        <position position="267"/>
    </location>
</feature>
<feature type="mutagenesis site" description="Abolished activity." evidence="4">
    <original>H</original>
    <variation>A</variation>
    <location>
        <position position="270"/>
    </location>
</feature>
<feature type="mutagenesis site" description="Reduced activity, but acquired possibility to use scopoletin and isoscopoletin as substrates and increased efficiency on bergaptol." evidence="4">
    <original>D</original>
    <variation>A</variation>
    <location>
        <position position="271"/>
    </location>
</feature>
<feature type="mutagenesis site" description="Reduced activity." evidence="4">
    <original>I</original>
    <variation>A</variation>
    <location>
        <position position="317"/>
    </location>
</feature>
<feature type="mutagenesis site" description="Reduced activity." evidence="4">
    <original>I</original>
    <variation>A</variation>
    <location>
        <position position="320"/>
    </location>
</feature>
<feature type="mutagenesis site" description="Abolished activity." evidence="4">
    <original>M</original>
    <variation>A</variation>
    <location>
        <position position="321"/>
    </location>
</feature>
<feature type="mutagenesis site" description="Reduced activity, but acquired possibility to use scopoletin and isoscopoletin as substrates and increased efficiency on bergaptol and xanthotoxol." evidence="4">
    <original>N</original>
    <variation>A</variation>
    <location>
        <position position="325"/>
    </location>
</feature>
<feature type="helix" evidence="7">
    <location>
        <begin position="19"/>
        <end position="28"/>
    </location>
</feature>
<feature type="turn" evidence="7">
    <location>
        <begin position="29"/>
        <end position="31"/>
    </location>
</feature>
<feature type="helix" evidence="7">
    <location>
        <begin position="32"/>
        <end position="42"/>
    </location>
</feature>
<feature type="helix" evidence="7">
    <location>
        <begin position="45"/>
        <end position="51"/>
    </location>
</feature>
<feature type="helix" evidence="7">
    <location>
        <begin position="60"/>
        <end position="64"/>
    </location>
</feature>
<feature type="strand" evidence="7">
    <location>
        <begin position="67"/>
        <end position="69"/>
    </location>
</feature>
<feature type="helix" evidence="7">
    <location>
        <begin position="74"/>
        <end position="87"/>
    </location>
</feature>
<feature type="strand" evidence="7">
    <location>
        <begin position="90"/>
        <end position="97"/>
    </location>
</feature>
<feature type="strand" evidence="7">
    <location>
        <begin position="101"/>
        <end position="109"/>
    </location>
</feature>
<feature type="helix" evidence="7">
    <location>
        <begin position="113"/>
        <end position="116"/>
    </location>
</feature>
<feature type="helix" evidence="7">
    <location>
        <begin position="126"/>
        <end position="132"/>
    </location>
</feature>
<feature type="helix" evidence="7">
    <location>
        <begin position="135"/>
        <end position="138"/>
    </location>
</feature>
<feature type="helix" evidence="7">
    <location>
        <begin position="139"/>
        <end position="143"/>
    </location>
</feature>
<feature type="helix" evidence="7">
    <location>
        <begin position="144"/>
        <end position="150"/>
    </location>
</feature>
<feature type="helix" evidence="7">
    <location>
        <begin position="154"/>
        <end position="159"/>
    </location>
</feature>
<feature type="helix" evidence="7">
    <location>
        <begin position="163"/>
        <end position="169"/>
    </location>
</feature>
<feature type="helix" evidence="7">
    <location>
        <begin position="171"/>
        <end position="195"/>
    </location>
</feature>
<feature type="strand" evidence="7">
    <location>
        <begin position="203"/>
        <end position="208"/>
    </location>
</feature>
<feature type="turn" evidence="7">
    <location>
        <begin position="211"/>
        <end position="213"/>
    </location>
</feature>
<feature type="helix" evidence="7">
    <location>
        <begin position="214"/>
        <end position="222"/>
    </location>
</feature>
<feature type="strand" evidence="7">
    <location>
        <begin position="227"/>
        <end position="232"/>
    </location>
</feature>
<feature type="helix" evidence="7">
    <location>
        <begin position="234"/>
        <end position="237"/>
    </location>
</feature>
<feature type="strand" evidence="7">
    <location>
        <begin position="246"/>
        <end position="250"/>
    </location>
</feature>
<feature type="turn" evidence="7">
    <location>
        <begin position="253"/>
        <end position="255"/>
    </location>
</feature>
<feature type="strand" evidence="7">
    <location>
        <begin position="261"/>
        <end position="267"/>
    </location>
</feature>
<feature type="helix" evidence="7">
    <location>
        <begin position="269"/>
        <end position="271"/>
    </location>
</feature>
<feature type="helix" evidence="7">
    <location>
        <begin position="274"/>
        <end position="286"/>
    </location>
</feature>
<feature type="strand" evidence="7">
    <location>
        <begin position="293"/>
        <end position="298"/>
    </location>
</feature>
<feature type="helix" evidence="7">
    <location>
        <begin position="309"/>
        <end position="324"/>
    </location>
</feature>
<feature type="helix" evidence="7">
    <location>
        <begin position="333"/>
        <end position="343"/>
    </location>
</feature>
<feature type="strand" evidence="7">
    <location>
        <begin position="349"/>
        <end position="354"/>
    </location>
</feature>
<feature type="strand" evidence="7">
    <location>
        <begin position="357"/>
        <end position="362"/>
    </location>
</feature>